<accession>B5EZ69</accession>
<gene>
    <name evidence="1" type="primary">fluC</name>
    <name evidence="1" type="synonym">crcB</name>
    <name type="ordered locus">SeAg_B0671</name>
</gene>
<name>FLUC_SALA4</name>
<protein>
    <recommendedName>
        <fullName evidence="1">Fluoride-specific ion channel FluC</fullName>
    </recommendedName>
</protein>
<feature type="chain" id="PRO_1000125150" description="Fluoride-specific ion channel FluC">
    <location>
        <begin position="1"/>
        <end position="127"/>
    </location>
</feature>
<feature type="transmembrane region" description="Helical" evidence="1">
    <location>
        <begin position="4"/>
        <end position="24"/>
    </location>
</feature>
<feature type="transmembrane region" description="Helical" evidence="1">
    <location>
        <begin position="35"/>
        <end position="55"/>
    </location>
</feature>
<feature type="transmembrane region" description="Helical" evidence="1">
    <location>
        <begin position="71"/>
        <end position="91"/>
    </location>
</feature>
<feature type="transmembrane region" description="Helical" evidence="1">
    <location>
        <begin position="103"/>
        <end position="123"/>
    </location>
</feature>
<feature type="binding site" evidence="1">
    <location>
        <position position="75"/>
    </location>
    <ligand>
        <name>Na(+)</name>
        <dbReference type="ChEBI" id="CHEBI:29101"/>
        <note>structural</note>
    </ligand>
</feature>
<feature type="binding site" evidence="1">
    <location>
        <position position="78"/>
    </location>
    <ligand>
        <name>Na(+)</name>
        <dbReference type="ChEBI" id="CHEBI:29101"/>
        <note>structural</note>
    </ligand>
</feature>
<organism>
    <name type="scientific">Salmonella agona (strain SL483)</name>
    <dbReference type="NCBI Taxonomy" id="454166"/>
    <lineage>
        <taxon>Bacteria</taxon>
        <taxon>Pseudomonadati</taxon>
        <taxon>Pseudomonadota</taxon>
        <taxon>Gammaproteobacteria</taxon>
        <taxon>Enterobacterales</taxon>
        <taxon>Enterobacteriaceae</taxon>
        <taxon>Salmonella</taxon>
    </lineage>
</organism>
<comment type="function">
    <text evidence="1">Fluoride-specific ion channel. Important for reducing fluoride concentration in the cell, thus reducing its toxicity.</text>
</comment>
<comment type="catalytic activity">
    <reaction evidence="1">
        <text>fluoride(in) = fluoride(out)</text>
        <dbReference type="Rhea" id="RHEA:76159"/>
        <dbReference type="ChEBI" id="CHEBI:17051"/>
    </reaction>
    <physiologicalReaction direction="left-to-right" evidence="1">
        <dbReference type="Rhea" id="RHEA:76160"/>
    </physiologicalReaction>
</comment>
<comment type="activity regulation">
    <text evidence="1">Na(+) is not transported, but it plays an essential structural role and its presence is essential for fluoride channel function.</text>
</comment>
<comment type="subcellular location">
    <subcellularLocation>
        <location evidence="1">Cell inner membrane</location>
        <topology evidence="1">Multi-pass membrane protein</topology>
    </subcellularLocation>
</comment>
<comment type="similarity">
    <text evidence="1">Belongs to the fluoride channel Fluc/FEX (TC 1.A.43) family.</text>
</comment>
<reference key="1">
    <citation type="journal article" date="2011" name="J. Bacteriol.">
        <title>Comparative genomics of 28 Salmonella enterica isolates: evidence for CRISPR-mediated adaptive sublineage evolution.</title>
        <authorList>
            <person name="Fricke W.F."/>
            <person name="Mammel M.K."/>
            <person name="McDermott P.F."/>
            <person name="Tartera C."/>
            <person name="White D.G."/>
            <person name="Leclerc J.E."/>
            <person name="Ravel J."/>
            <person name="Cebula T.A."/>
        </authorList>
    </citation>
    <scope>NUCLEOTIDE SEQUENCE [LARGE SCALE GENOMIC DNA]</scope>
    <source>
        <strain>SL483</strain>
    </source>
</reference>
<proteinExistence type="inferred from homology"/>
<dbReference type="EMBL" id="CP001138">
    <property type="protein sequence ID" value="ACH50991.1"/>
    <property type="molecule type" value="Genomic_DNA"/>
</dbReference>
<dbReference type="RefSeq" id="WP_000939753.1">
    <property type="nucleotide sequence ID" value="NC_011149.1"/>
</dbReference>
<dbReference type="SMR" id="B5EZ69"/>
<dbReference type="KEGG" id="sea:SeAg_B0671"/>
<dbReference type="HOGENOM" id="CLU_114342_3_3_6"/>
<dbReference type="Proteomes" id="UP000008819">
    <property type="component" value="Chromosome"/>
</dbReference>
<dbReference type="GO" id="GO:0005886">
    <property type="term" value="C:plasma membrane"/>
    <property type="evidence" value="ECO:0007669"/>
    <property type="project" value="UniProtKB-SubCell"/>
</dbReference>
<dbReference type="GO" id="GO:0062054">
    <property type="term" value="F:fluoride channel activity"/>
    <property type="evidence" value="ECO:0007669"/>
    <property type="project" value="UniProtKB-UniRule"/>
</dbReference>
<dbReference type="GO" id="GO:0046872">
    <property type="term" value="F:metal ion binding"/>
    <property type="evidence" value="ECO:0007669"/>
    <property type="project" value="UniProtKB-KW"/>
</dbReference>
<dbReference type="GO" id="GO:0140114">
    <property type="term" value="P:cellular detoxification of fluoride"/>
    <property type="evidence" value="ECO:0007669"/>
    <property type="project" value="UniProtKB-UniRule"/>
</dbReference>
<dbReference type="HAMAP" id="MF_00454">
    <property type="entry name" value="FluC"/>
    <property type="match status" value="1"/>
</dbReference>
<dbReference type="InterPro" id="IPR003691">
    <property type="entry name" value="FluC"/>
</dbReference>
<dbReference type="NCBIfam" id="TIGR00494">
    <property type="entry name" value="crcB"/>
    <property type="match status" value="1"/>
</dbReference>
<dbReference type="NCBIfam" id="NF010792">
    <property type="entry name" value="PRK14196.1"/>
    <property type="match status" value="1"/>
</dbReference>
<dbReference type="PANTHER" id="PTHR28259">
    <property type="entry name" value="FLUORIDE EXPORT PROTEIN 1-RELATED"/>
    <property type="match status" value="1"/>
</dbReference>
<dbReference type="PANTHER" id="PTHR28259:SF1">
    <property type="entry name" value="FLUORIDE EXPORT PROTEIN 1-RELATED"/>
    <property type="match status" value="1"/>
</dbReference>
<dbReference type="Pfam" id="PF02537">
    <property type="entry name" value="CRCB"/>
    <property type="match status" value="1"/>
</dbReference>
<sequence>MLQLLLAVFIGGGTGSVARWMLSMRFNPLHQAIPIGTLTANLLGAFIIGMGFAWFNRMTHIDPMWKVLITTGFCGGLTTFSTFSAEVVFLLQEGRFGWALLNVLINLLGSFAMTALAFWLFSAAAAR</sequence>
<evidence type="ECO:0000255" key="1">
    <source>
        <dbReference type="HAMAP-Rule" id="MF_00454"/>
    </source>
</evidence>
<keyword id="KW-0997">Cell inner membrane</keyword>
<keyword id="KW-1003">Cell membrane</keyword>
<keyword id="KW-0407">Ion channel</keyword>
<keyword id="KW-0406">Ion transport</keyword>
<keyword id="KW-0472">Membrane</keyword>
<keyword id="KW-0479">Metal-binding</keyword>
<keyword id="KW-0915">Sodium</keyword>
<keyword id="KW-0812">Transmembrane</keyword>
<keyword id="KW-1133">Transmembrane helix</keyword>
<keyword id="KW-0813">Transport</keyword>